<protein>
    <recommendedName>
        <fullName evidence="1">Nucleotide-binding protein Noc_2797</fullName>
    </recommendedName>
</protein>
<name>Y2797_NITOC</name>
<evidence type="ECO:0000255" key="1">
    <source>
        <dbReference type="HAMAP-Rule" id="MF_00636"/>
    </source>
</evidence>
<sequence>MKLHIISGVSGSGKSIALHALEDRDYYCIDNLPIYLLPTFAKRMQRDARQLRAAIGIDARNLPQELRQFPQILEEIERAGVHCHIIFLDASDTTLLKRFSETRRKHPLSHIPLAEAIHCERALLGTIAEKADLRIDTTCTTIHQLRDLISERIGDDARPGMSLLFQSFGYKHGVPLDADFVFDVRCLPNPHWEPHLRPLSGRDSEVIAYLKRHETVTQMQQDLITFLQHWLQRFQNTNRSYLTVAIGCTGGQHRSVYLAEQLKAHFHSLHARVLCRHRELS</sequence>
<organism>
    <name type="scientific">Nitrosococcus oceani (strain ATCC 19707 / BCRC 17464 / JCM 30415 / NCIMB 11848 / C-107)</name>
    <dbReference type="NCBI Taxonomy" id="323261"/>
    <lineage>
        <taxon>Bacteria</taxon>
        <taxon>Pseudomonadati</taxon>
        <taxon>Pseudomonadota</taxon>
        <taxon>Gammaproteobacteria</taxon>
        <taxon>Chromatiales</taxon>
        <taxon>Chromatiaceae</taxon>
        <taxon>Nitrosococcus</taxon>
    </lineage>
</organism>
<dbReference type="EMBL" id="CP000127">
    <property type="protein sequence ID" value="ABA59244.1"/>
    <property type="molecule type" value="Genomic_DNA"/>
</dbReference>
<dbReference type="SMR" id="Q3J7F2"/>
<dbReference type="FunCoup" id="Q3J7F2">
    <property type="interactions" value="168"/>
</dbReference>
<dbReference type="STRING" id="323261.Noc_2797"/>
<dbReference type="KEGG" id="noc:Noc_2797"/>
<dbReference type="eggNOG" id="COG1660">
    <property type="taxonomic scope" value="Bacteria"/>
</dbReference>
<dbReference type="HOGENOM" id="CLU_059558_1_1_6"/>
<dbReference type="InParanoid" id="Q3J7F2"/>
<dbReference type="Proteomes" id="UP000006838">
    <property type="component" value="Chromosome"/>
</dbReference>
<dbReference type="GO" id="GO:0005524">
    <property type="term" value="F:ATP binding"/>
    <property type="evidence" value="ECO:0007669"/>
    <property type="project" value="UniProtKB-UniRule"/>
</dbReference>
<dbReference type="GO" id="GO:0005525">
    <property type="term" value="F:GTP binding"/>
    <property type="evidence" value="ECO:0007669"/>
    <property type="project" value="UniProtKB-UniRule"/>
</dbReference>
<dbReference type="Gene3D" id="3.40.50.300">
    <property type="entry name" value="P-loop containing nucleotide triphosphate hydrolases"/>
    <property type="match status" value="1"/>
</dbReference>
<dbReference type="HAMAP" id="MF_00636">
    <property type="entry name" value="RapZ_like"/>
    <property type="match status" value="1"/>
</dbReference>
<dbReference type="InterPro" id="IPR027417">
    <property type="entry name" value="P-loop_NTPase"/>
</dbReference>
<dbReference type="InterPro" id="IPR005337">
    <property type="entry name" value="RapZ-like"/>
</dbReference>
<dbReference type="InterPro" id="IPR053930">
    <property type="entry name" value="RapZ-like_N"/>
</dbReference>
<dbReference type="InterPro" id="IPR053931">
    <property type="entry name" value="RapZ_C"/>
</dbReference>
<dbReference type="NCBIfam" id="NF003828">
    <property type="entry name" value="PRK05416.1"/>
    <property type="match status" value="1"/>
</dbReference>
<dbReference type="PANTHER" id="PTHR30448">
    <property type="entry name" value="RNASE ADAPTER PROTEIN RAPZ"/>
    <property type="match status" value="1"/>
</dbReference>
<dbReference type="PANTHER" id="PTHR30448:SF0">
    <property type="entry name" value="RNASE ADAPTER PROTEIN RAPZ"/>
    <property type="match status" value="1"/>
</dbReference>
<dbReference type="Pfam" id="PF22740">
    <property type="entry name" value="PapZ_C"/>
    <property type="match status" value="1"/>
</dbReference>
<dbReference type="Pfam" id="PF03668">
    <property type="entry name" value="RapZ-like_N"/>
    <property type="match status" value="1"/>
</dbReference>
<dbReference type="PIRSF" id="PIRSF005052">
    <property type="entry name" value="P-loopkin"/>
    <property type="match status" value="1"/>
</dbReference>
<dbReference type="SUPFAM" id="SSF52540">
    <property type="entry name" value="P-loop containing nucleoside triphosphate hydrolases"/>
    <property type="match status" value="1"/>
</dbReference>
<proteinExistence type="inferred from homology"/>
<reference key="1">
    <citation type="journal article" date="2006" name="Appl. Environ. Microbiol.">
        <title>Complete genome sequence of the marine, chemolithoautotrophic, ammonia-oxidizing bacterium Nitrosococcus oceani ATCC 19707.</title>
        <authorList>
            <person name="Klotz M.G."/>
            <person name="Arp D.J."/>
            <person name="Chain P.S.G."/>
            <person name="El-Sheikh A.F."/>
            <person name="Hauser L.J."/>
            <person name="Hommes N.G."/>
            <person name="Larimer F.W."/>
            <person name="Malfatti S.A."/>
            <person name="Norton J.M."/>
            <person name="Poret-Peterson A.T."/>
            <person name="Vergez L.M."/>
            <person name="Ward B.B."/>
        </authorList>
    </citation>
    <scope>NUCLEOTIDE SEQUENCE [LARGE SCALE GENOMIC DNA]</scope>
    <source>
        <strain>ATCC 19707 / BCRC 17464 / JCM 30415 / NCIMB 11848 / C-107</strain>
    </source>
</reference>
<feature type="chain" id="PRO_0000258975" description="Nucleotide-binding protein Noc_2797">
    <location>
        <begin position="1"/>
        <end position="281"/>
    </location>
</feature>
<feature type="binding site" evidence="1">
    <location>
        <begin position="8"/>
        <end position="15"/>
    </location>
    <ligand>
        <name>ATP</name>
        <dbReference type="ChEBI" id="CHEBI:30616"/>
    </ligand>
</feature>
<feature type="binding site" evidence="1">
    <location>
        <begin position="58"/>
        <end position="61"/>
    </location>
    <ligand>
        <name>GTP</name>
        <dbReference type="ChEBI" id="CHEBI:37565"/>
    </ligand>
</feature>
<accession>Q3J7F2</accession>
<keyword id="KW-0067">ATP-binding</keyword>
<keyword id="KW-0342">GTP-binding</keyword>
<keyword id="KW-0547">Nucleotide-binding</keyword>
<keyword id="KW-1185">Reference proteome</keyword>
<gene>
    <name type="ordered locus">Noc_2797</name>
</gene>
<comment type="function">
    <text evidence="1">Displays ATPase and GTPase activities.</text>
</comment>
<comment type="similarity">
    <text evidence="1">Belongs to the RapZ-like family.</text>
</comment>